<evidence type="ECO:0000255" key="1">
    <source>
        <dbReference type="HAMAP-Rule" id="MF_00302"/>
    </source>
</evidence>
<sequence length="104" mass="11932">MAIIPDKQDNTVLERQEQKLKPPAMFKVVLLNDDFTPMEFVVMIVQEYFNKDRETATQIMLKVHREGRGVCGVYTRDIASTKVEQVVTHARQAGHPLQCVMEEA</sequence>
<dbReference type="EMBL" id="CP001043">
    <property type="protein sequence ID" value="ACC69759.1"/>
    <property type="molecule type" value="Genomic_DNA"/>
</dbReference>
<dbReference type="RefSeq" id="WP_012399982.1">
    <property type="nucleotide sequence ID" value="NZ_CADFGH010000001.1"/>
</dbReference>
<dbReference type="SMR" id="B2JDY3"/>
<dbReference type="STRING" id="391038.Bphy_0568"/>
<dbReference type="KEGG" id="bph:Bphy_0568"/>
<dbReference type="eggNOG" id="COG2127">
    <property type="taxonomic scope" value="Bacteria"/>
</dbReference>
<dbReference type="HOGENOM" id="CLU_134358_0_0_4"/>
<dbReference type="OrthoDB" id="9796121at2"/>
<dbReference type="Proteomes" id="UP000001192">
    <property type="component" value="Chromosome 1"/>
</dbReference>
<dbReference type="GO" id="GO:0030163">
    <property type="term" value="P:protein catabolic process"/>
    <property type="evidence" value="ECO:0007669"/>
    <property type="project" value="InterPro"/>
</dbReference>
<dbReference type="GO" id="GO:0006508">
    <property type="term" value="P:proteolysis"/>
    <property type="evidence" value="ECO:0007669"/>
    <property type="project" value="UniProtKB-UniRule"/>
</dbReference>
<dbReference type="FunFam" id="3.30.1390.10:FF:000002">
    <property type="entry name" value="ATP-dependent Clp protease adapter protein ClpS"/>
    <property type="match status" value="1"/>
</dbReference>
<dbReference type="Gene3D" id="3.30.1390.10">
    <property type="match status" value="1"/>
</dbReference>
<dbReference type="HAMAP" id="MF_00302">
    <property type="entry name" value="ClpS"/>
    <property type="match status" value="1"/>
</dbReference>
<dbReference type="InterPro" id="IPR022935">
    <property type="entry name" value="ClpS"/>
</dbReference>
<dbReference type="InterPro" id="IPR003769">
    <property type="entry name" value="ClpS_core"/>
</dbReference>
<dbReference type="InterPro" id="IPR014719">
    <property type="entry name" value="Ribosomal_bL12_C/ClpS-like"/>
</dbReference>
<dbReference type="NCBIfam" id="NF000672">
    <property type="entry name" value="PRK00033.1-5"/>
    <property type="match status" value="1"/>
</dbReference>
<dbReference type="PANTHER" id="PTHR33473:SF19">
    <property type="entry name" value="ATP-DEPENDENT CLP PROTEASE ADAPTER PROTEIN CLPS"/>
    <property type="match status" value="1"/>
</dbReference>
<dbReference type="PANTHER" id="PTHR33473">
    <property type="entry name" value="ATP-DEPENDENT CLP PROTEASE ADAPTER PROTEIN CLPS1, CHLOROPLASTIC"/>
    <property type="match status" value="1"/>
</dbReference>
<dbReference type="Pfam" id="PF02617">
    <property type="entry name" value="ClpS"/>
    <property type="match status" value="1"/>
</dbReference>
<dbReference type="SUPFAM" id="SSF54736">
    <property type="entry name" value="ClpS-like"/>
    <property type="match status" value="1"/>
</dbReference>
<protein>
    <recommendedName>
        <fullName evidence="1">ATP-dependent Clp protease adapter protein ClpS</fullName>
    </recommendedName>
</protein>
<gene>
    <name evidence="1" type="primary">clpS</name>
    <name type="ordered locus">Bphy_0568</name>
</gene>
<name>CLPS_PARP8</name>
<proteinExistence type="inferred from homology"/>
<organism>
    <name type="scientific">Paraburkholderia phymatum (strain DSM 17167 / CIP 108236 / LMG 21445 / STM815)</name>
    <name type="common">Burkholderia phymatum</name>
    <dbReference type="NCBI Taxonomy" id="391038"/>
    <lineage>
        <taxon>Bacteria</taxon>
        <taxon>Pseudomonadati</taxon>
        <taxon>Pseudomonadota</taxon>
        <taxon>Betaproteobacteria</taxon>
        <taxon>Burkholderiales</taxon>
        <taxon>Burkholderiaceae</taxon>
        <taxon>Paraburkholderia</taxon>
    </lineage>
</organism>
<reference key="1">
    <citation type="journal article" date="2014" name="Stand. Genomic Sci.">
        <title>Complete genome sequence of Burkholderia phymatum STM815(T), a broad host range and efficient nitrogen-fixing symbiont of Mimosa species.</title>
        <authorList>
            <person name="Moulin L."/>
            <person name="Klonowska A."/>
            <person name="Caroline B."/>
            <person name="Booth K."/>
            <person name="Vriezen J.A."/>
            <person name="Melkonian R."/>
            <person name="James E.K."/>
            <person name="Young J.P."/>
            <person name="Bena G."/>
            <person name="Hauser L."/>
            <person name="Land M."/>
            <person name="Kyrpides N."/>
            <person name="Bruce D."/>
            <person name="Chain P."/>
            <person name="Copeland A."/>
            <person name="Pitluck S."/>
            <person name="Woyke T."/>
            <person name="Lizotte-Waniewski M."/>
            <person name="Bristow J."/>
            <person name="Riley M."/>
        </authorList>
    </citation>
    <scope>NUCLEOTIDE SEQUENCE [LARGE SCALE GENOMIC DNA]</scope>
    <source>
        <strain>DSM 17167 / CIP 108236 / LMG 21445 / STM815</strain>
    </source>
</reference>
<accession>B2JDY3</accession>
<keyword id="KW-1185">Reference proteome</keyword>
<feature type="chain" id="PRO_1000115451" description="ATP-dependent Clp protease adapter protein ClpS">
    <location>
        <begin position="1"/>
        <end position="104"/>
    </location>
</feature>
<comment type="function">
    <text evidence="1">Involved in the modulation of the specificity of the ClpAP-mediated ATP-dependent protein degradation.</text>
</comment>
<comment type="subunit">
    <text evidence="1">Binds to the N-terminal domain of the chaperone ClpA.</text>
</comment>
<comment type="similarity">
    <text evidence="1">Belongs to the ClpS family.</text>
</comment>